<dbReference type="EMBL" id="ABSV01001816">
    <property type="protein sequence ID" value="EDZ70141.1"/>
    <property type="molecule type" value="Genomic_DNA"/>
</dbReference>
<dbReference type="Proteomes" id="UP000008988">
    <property type="component" value="Unassembled WGS sequence"/>
</dbReference>
<dbReference type="InterPro" id="IPR031443">
    <property type="entry name" value="Mbr1"/>
</dbReference>
<dbReference type="Pfam" id="PF17058">
    <property type="entry name" value="MBR1"/>
    <property type="match status" value="2"/>
</dbReference>
<gene>
    <name type="primary">ISF1</name>
    <name type="synonym">MBR3</name>
    <name type="ORF">AWRI1631_132220</name>
</gene>
<sequence>MIASEIFERGVQDPFCQDCDYEDETDVQSFLGSNDLNDFVNSKLASFSFQNSSKSNNSHHSSSTNAGNTSRHIGNHTIGHHLRKIKTAPHHLYGFVPANSTNNSNEPIRPSPRRIRANSSTLIHQLSRQSTRQSSLGDAADSCFDHKCIKPRSRHSSCYGIPTHLYGLEKYVSSELDSLAVANDQSNDLTSPLTSVSTPASNSNSYLNLNSSSAAYPSSYLSNEKNNRLKLISHGKISSNNVPGHSGNLNHYHRERTPSNLRRESFSLLSNGSSSSPLQTRNNSYSNSLVKSPSNSSLNTSVASSNEESIPHTSNCLEERNPRRKSFIKLSLASSFSN</sequence>
<name>ISF1_YEAS6</name>
<accession>B5VPK7</accession>
<evidence type="ECO:0000250" key="1"/>
<evidence type="ECO:0000250" key="2">
    <source>
        <dbReference type="UniProtKB" id="P32488"/>
    </source>
</evidence>
<evidence type="ECO:0000256" key="3">
    <source>
        <dbReference type="SAM" id="MobiDB-lite"/>
    </source>
</evidence>
<evidence type="ECO:0000305" key="4"/>
<comment type="function">
    <text evidence="1">Could influence the NAM7/UPF1 function, possibly at the level of mRNA turnover. Participates in mitochondrial biogenesis (By similarity).</text>
</comment>
<comment type="similarity">
    <text evidence="4">Belongs to the ISF1/MBR1 family.</text>
</comment>
<keyword id="KW-0597">Phosphoprotein</keyword>
<feature type="chain" id="PRO_0000408858" description="Increasing suppression factor 1">
    <location>
        <begin position="1"/>
        <end position="338"/>
    </location>
</feature>
<feature type="region of interest" description="Disordered" evidence="3">
    <location>
        <begin position="50"/>
        <end position="75"/>
    </location>
</feature>
<feature type="region of interest" description="Disordered" evidence="3">
    <location>
        <begin position="267"/>
        <end position="318"/>
    </location>
</feature>
<feature type="compositionally biased region" description="Low complexity" evidence="3">
    <location>
        <begin position="50"/>
        <end position="70"/>
    </location>
</feature>
<feature type="compositionally biased region" description="Low complexity" evidence="3">
    <location>
        <begin position="267"/>
        <end position="306"/>
    </location>
</feature>
<feature type="compositionally biased region" description="Polar residues" evidence="3">
    <location>
        <begin position="307"/>
        <end position="316"/>
    </location>
</feature>
<feature type="modified residue" description="Phosphoserine" evidence="2">
    <location>
        <position position="119"/>
    </location>
</feature>
<proteinExistence type="inferred from homology"/>
<reference key="1">
    <citation type="journal article" date="2008" name="FEMS Yeast Res.">
        <title>Comparative genome analysis of a Saccharomyces cerevisiae wine strain.</title>
        <authorList>
            <person name="Borneman A.R."/>
            <person name="Forgan A.H."/>
            <person name="Pretorius I.S."/>
            <person name="Chambers P.J."/>
        </authorList>
    </citation>
    <scope>NUCLEOTIDE SEQUENCE [LARGE SCALE GENOMIC DNA]</scope>
    <source>
        <strain>AWRI1631</strain>
    </source>
</reference>
<organism>
    <name type="scientific">Saccharomyces cerevisiae (strain AWRI1631)</name>
    <name type="common">Baker's yeast</name>
    <dbReference type="NCBI Taxonomy" id="545124"/>
    <lineage>
        <taxon>Eukaryota</taxon>
        <taxon>Fungi</taxon>
        <taxon>Dikarya</taxon>
        <taxon>Ascomycota</taxon>
        <taxon>Saccharomycotina</taxon>
        <taxon>Saccharomycetes</taxon>
        <taxon>Saccharomycetales</taxon>
        <taxon>Saccharomycetaceae</taxon>
        <taxon>Saccharomyces</taxon>
    </lineage>
</organism>
<protein>
    <recommendedName>
        <fullName>Increasing suppression factor 1</fullName>
    </recommendedName>
    <alternativeName>
        <fullName>Mitochondrial biogenesis regulation protein 3</fullName>
    </alternativeName>
</protein>